<reference key="1">
    <citation type="journal article" date="2006" name="Genome Res.">
        <title>Massive genome erosion and functional adaptations provide insights into the symbiotic lifestyle of Sodalis glossinidius in the tsetse host.</title>
        <authorList>
            <person name="Toh H."/>
            <person name="Weiss B.L."/>
            <person name="Perkin S.A.H."/>
            <person name="Yamashita A."/>
            <person name="Oshima K."/>
            <person name="Hattori M."/>
            <person name="Aksoy S."/>
        </authorList>
    </citation>
    <scope>NUCLEOTIDE SEQUENCE [LARGE SCALE GENOMIC DNA]</scope>
    <source>
        <strain>morsitans</strain>
    </source>
</reference>
<keyword id="KW-0328">Glycosyltransferase</keyword>
<keyword id="KW-0808">Transferase</keyword>
<dbReference type="EC" id="2.4.2.4" evidence="1"/>
<dbReference type="EMBL" id="AP008232">
    <property type="protein sequence ID" value="BAE73670.1"/>
    <property type="molecule type" value="Genomic_DNA"/>
</dbReference>
<dbReference type="RefSeq" id="WP_011410258.1">
    <property type="nucleotide sequence ID" value="NC_007712.1"/>
</dbReference>
<dbReference type="SMR" id="Q2NW05"/>
<dbReference type="STRING" id="343509.SG0395"/>
<dbReference type="KEGG" id="sgl:SG0395"/>
<dbReference type="eggNOG" id="COG0213">
    <property type="taxonomic scope" value="Bacteria"/>
</dbReference>
<dbReference type="HOGENOM" id="CLU_025040_0_1_6"/>
<dbReference type="OrthoDB" id="9763887at2"/>
<dbReference type="BioCyc" id="SGLO343509:SGP1_RS03670-MONOMER"/>
<dbReference type="UniPathway" id="UPA00578">
    <property type="reaction ID" value="UER00638"/>
</dbReference>
<dbReference type="Proteomes" id="UP000001932">
    <property type="component" value="Chromosome"/>
</dbReference>
<dbReference type="GO" id="GO:0005829">
    <property type="term" value="C:cytosol"/>
    <property type="evidence" value="ECO:0007669"/>
    <property type="project" value="TreeGrafter"/>
</dbReference>
<dbReference type="GO" id="GO:0004645">
    <property type="term" value="F:1,4-alpha-oligoglucan phosphorylase activity"/>
    <property type="evidence" value="ECO:0007669"/>
    <property type="project" value="InterPro"/>
</dbReference>
<dbReference type="GO" id="GO:0009032">
    <property type="term" value="F:thymidine phosphorylase activity"/>
    <property type="evidence" value="ECO:0007669"/>
    <property type="project" value="UniProtKB-UniRule"/>
</dbReference>
<dbReference type="GO" id="GO:0006206">
    <property type="term" value="P:pyrimidine nucleobase metabolic process"/>
    <property type="evidence" value="ECO:0007669"/>
    <property type="project" value="InterPro"/>
</dbReference>
<dbReference type="GO" id="GO:0046104">
    <property type="term" value="P:thymidine metabolic process"/>
    <property type="evidence" value="ECO:0007669"/>
    <property type="project" value="UniProtKB-UniRule"/>
</dbReference>
<dbReference type="FunFam" id="3.40.1030.10:FF:000001">
    <property type="entry name" value="Thymidine phosphorylase"/>
    <property type="match status" value="1"/>
</dbReference>
<dbReference type="FunFam" id="3.90.1170.30:FF:000001">
    <property type="entry name" value="Thymidine phosphorylase"/>
    <property type="match status" value="1"/>
</dbReference>
<dbReference type="Gene3D" id="3.40.1030.10">
    <property type="entry name" value="Nucleoside phosphorylase/phosphoribosyltransferase catalytic domain"/>
    <property type="match status" value="1"/>
</dbReference>
<dbReference type="Gene3D" id="3.90.1170.30">
    <property type="entry name" value="Pyrimidine nucleoside phosphorylase-like, C-terminal domain"/>
    <property type="match status" value="1"/>
</dbReference>
<dbReference type="Gene3D" id="1.20.970.10">
    <property type="entry name" value="Transferase, Pyrimidine Nucleoside Phosphorylase, Chain C"/>
    <property type="match status" value="1"/>
</dbReference>
<dbReference type="HAMAP" id="MF_01628">
    <property type="entry name" value="Thymid_phosp"/>
    <property type="match status" value="1"/>
</dbReference>
<dbReference type="InterPro" id="IPR000312">
    <property type="entry name" value="Glycosyl_Trfase_fam3"/>
</dbReference>
<dbReference type="InterPro" id="IPR017459">
    <property type="entry name" value="Glycosyl_Trfase_fam3_N_dom"/>
</dbReference>
<dbReference type="InterPro" id="IPR036320">
    <property type="entry name" value="Glycosyl_Trfase_fam3_N_dom_sf"/>
</dbReference>
<dbReference type="InterPro" id="IPR035902">
    <property type="entry name" value="Nuc_phospho_transferase"/>
</dbReference>
<dbReference type="InterPro" id="IPR036566">
    <property type="entry name" value="PYNP-like_C_sf"/>
</dbReference>
<dbReference type="InterPro" id="IPR013102">
    <property type="entry name" value="PYNP_C"/>
</dbReference>
<dbReference type="InterPro" id="IPR018090">
    <property type="entry name" value="Pyrmidine_PPas_bac/euk"/>
</dbReference>
<dbReference type="InterPro" id="IPR017872">
    <property type="entry name" value="Pyrmidine_PPase_CS"/>
</dbReference>
<dbReference type="InterPro" id="IPR000053">
    <property type="entry name" value="Thymidine/pyrmidine_PPase"/>
</dbReference>
<dbReference type="InterPro" id="IPR013465">
    <property type="entry name" value="Thymidine_Pase"/>
</dbReference>
<dbReference type="NCBIfam" id="NF004490">
    <property type="entry name" value="PRK05820.1"/>
    <property type="match status" value="1"/>
</dbReference>
<dbReference type="NCBIfam" id="TIGR02643">
    <property type="entry name" value="T_phosphoryl"/>
    <property type="match status" value="1"/>
</dbReference>
<dbReference type="NCBIfam" id="TIGR02644">
    <property type="entry name" value="Y_phosphoryl"/>
    <property type="match status" value="1"/>
</dbReference>
<dbReference type="PANTHER" id="PTHR10515">
    <property type="entry name" value="THYMIDINE PHOSPHORYLASE"/>
    <property type="match status" value="1"/>
</dbReference>
<dbReference type="PANTHER" id="PTHR10515:SF0">
    <property type="entry name" value="THYMIDINE PHOSPHORYLASE"/>
    <property type="match status" value="1"/>
</dbReference>
<dbReference type="Pfam" id="PF02885">
    <property type="entry name" value="Glycos_trans_3N"/>
    <property type="match status" value="1"/>
</dbReference>
<dbReference type="Pfam" id="PF00591">
    <property type="entry name" value="Glycos_transf_3"/>
    <property type="match status" value="1"/>
</dbReference>
<dbReference type="Pfam" id="PF07831">
    <property type="entry name" value="PYNP_C"/>
    <property type="match status" value="1"/>
</dbReference>
<dbReference type="PIRSF" id="PIRSF000478">
    <property type="entry name" value="TP_PyNP"/>
    <property type="match status" value="1"/>
</dbReference>
<dbReference type="SMART" id="SM00941">
    <property type="entry name" value="PYNP_C"/>
    <property type="match status" value="1"/>
</dbReference>
<dbReference type="SUPFAM" id="SSF52418">
    <property type="entry name" value="Nucleoside phosphorylase/phosphoribosyltransferase catalytic domain"/>
    <property type="match status" value="1"/>
</dbReference>
<dbReference type="SUPFAM" id="SSF47648">
    <property type="entry name" value="Nucleoside phosphorylase/phosphoribosyltransferase N-terminal domain"/>
    <property type="match status" value="1"/>
</dbReference>
<dbReference type="SUPFAM" id="SSF54680">
    <property type="entry name" value="Pyrimidine nucleoside phosphorylase C-terminal domain"/>
    <property type="match status" value="1"/>
</dbReference>
<dbReference type="PROSITE" id="PS00647">
    <property type="entry name" value="THYMID_PHOSPHORYLASE"/>
    <property type="match status" value="1"/>
</dbReference>
<sequence>MFLAQEIIRKKRDGEPLSDEEIRFFINGVYDNTVSEGQIAALAMTIFFHDMDLQERVALTLAMRDSGHTLDWRREALGGPVVDKHSTGGVGDVTSLMLGPMIAACGGFVPMVSGRGLGHTGGTLDKLEAIPGLAIFLDDDAFRSQVKQVGVAIMGQTHSLAPADKRIYATRDITATVDSIPLITASILAKKLAEGLDALVMDVKVGSGALMPTLAGSEALAQAIVGVANGAGCRTIALLTDMNQVLASSAGNALEVREAVRFLTNDERNPRLFEVTMALCSEMLMIAGLAHSEDAARTALVRALDSGEAAERFGRMVAVQGGPADFVQRYDLYLPVATLSKPVFPAGEGYIRSMDTRALGMTVVALGGGRQRARDAIDYSVGLTEMARLGDYVDANTPLAVVHAASEESWARAAEAVRAAIQLGDVAPQALPVVYRRITAAAD</sequence>
<comment type="function">
    <text evidence="1">The enzymes which catalyze the reversible phosphorolysis of pyrimidine nucleosides are involved in the degradation of these compounds and in their utilization as carbon and energy sources, or in the rescue of pyrimidine bases for nucleotide synthesis.</text>
</comment>
<comment type="catalytic activity">
    <reaction evidence="1">
        <text>thymidine + phosphate = 2-deoxy-alpha-D-ribose 1-phosphate + thymine</text>
        <dbReference type="Rhea" id="RHEA:16037"/>
        <dbReference type="ChEBI" id="CHEBI:17748"/>
        <dbReference type="ChEBI" id="CHEBI:17821"/>
        <dbReference type="ChEBI" id="CHEBI:43474"/>
        <dbReference type="ChEBI" id="CHEBI:57259"/>
        <dbReference type="EC" id="2.4.2.4"/>
    </reaction>
</comment>
<comment type="pathway">
    <text evidence="1">Pyrimidine metabolism; dTMP biosynthesis via salvage pathway; dTMP from thymine: step 1/2.</text>
</comment>
<comment type="subunit">
    <text evidence="1">Homodimer.</text>
</comment>
<comment type="similarity">
    <text evidence="1">Belongs to the thymidine/pyrimidine-nucleoside phosphorylase family.</text>
</comment>
<name>TYPH_SODGM</name>
<feature type="chain" id="PRO_1000069678" description="Thymidine phosphorylase">
    <location>
        <begin position="1"/>
        <end position="443"/>
    </location>
</feature>
<organism>
    <name type="scientific">Sodalis glossinidius (strain morsitans)</name>
    <dbReference type="NCBI Taxonomy" id="343509"/>
    <lineage>
        <taxon>Bacteria</taxon>
        <taxon>Pseudomonadati</taxon>
        <taxon>Pseudomonadota</taxon>
        <taxon>Gammaproteobacteria</taxon>
        <taxon>Enterobacterales</taxon>
        <taxon>Bruguierivoracaceae</taxon>
        <taxon>Sodalis</taxon>
    </lineage>
</organism>
<protein>
    <recommendedName>
        <fullName evidence="1">Thymidine phosphorylase</fullName>
        <ecNumber evidence="1">2.4.2.4</ecNumber>
    </recommendedName>
    <alternativeName>
        <fullName evidence="1">TdRPase</fullName>
    </alternativeName>
</protein>
<gene>
    <name evidence="1" type="primary">deoA</name>
    <name type="ordered locus">SG0395</name>
</gene>
<accession>Q2NW05</accession>
<evidence type="ECO:0000255" key="1">
    <source>
        <dbReference type="HAMAP-Rule" id="MF_01628"/>
    </source>
</evidence>
<proteinExistence type="inferred from homology"/>